<dbReference type="EMBL" id="Y15225">
    <property type="protein sequence ID" value="CAA75514.1"/>
    <property type="molecule type" value="mRNA"/>
</dbReference>
<dbReference type="EMBL" id="DQ087970">
    <property type="protein sequence ID" value="AAY87936.1"/>
    <property type="molecule type" value="mRNA"/>
</dbReference>
<dbReference type="EMBL" id="Y09511">
    <property type="protein sequence ID" value="CAA70703.1"/>
    <property type="molecule type" value="mRNA"/>
</dbReference>
<dbReference type="EMBL" id="AF001308">
    <property type="protein sequence ID" value="AAC78706.1"/>
    <property type="molecule type" value="Genomic_DNA"/>
</dbReference>
<dbReference type="EMBL" id="AL161493">
    <property type="protein sequence ID" value="CAB80708.1"/>
    <property type="molecule type" value="Genomic_DNA"/>
</dbReference>
<dbReference type="EMBL" id="CP002687">
    <property type="protein sequence ID" value="AEE82131.1"/>
    <property type="molecule type" value="Genomic_DNA"/>
</dbReference>
<dbReference type="EMBL" id="AF385693">
    <property type="protein sequence ID" value="AAK60286.1"/>
    <property type="molecule type" value="mRNA"/>
</dbReference>
<dbReference type="EMBL" id="AY081725">
    <property type="protein sequence ID" value="AAL87378.1"/>
    <property type="molecule type" value="mRNA"/>
</dbReference>
<dbReference type="PIR" id="T01516">
    <property type="entry name" value="T01516"/>
</dbReference>
<dbReference type="PIR" id="T52099">
    <property type="entry name" value="T52099"/>
</dbReference>
<dbReference type="RefSeq" id="NP_192124.1">
    <property type="nucleotide sequence ID" value="NM_116447.3"/>
</dbReference>
<dbReference type="PDB" id="4TNM">
    <property type="method" value="X-ray"/>
    <property type="resolution" value="2.90 A"/>
    <property type="chains" value="A=1-531"/>
</dbReference>
<dbReference type="PDBsum" id="4TNM"/>
<dbReference type="SMR" id="O04294"/>
<dbReference type="BioGRID" id="12765">
    <property type="interactions" value="38"/>
</dbReference>
<dbReference type="FunCoup" id="O04294">
    <property type="interactions" value="3848"/>
</dbReference>
<dbReference type="IntAct" id="O04294">
    <property type="interactions" value="49"/>
</dbReference>
<dbReference type="STRING" id="3702.O04294"/>
<dbReference type="PaxDb" id="3702-AT4G02150.1"/>
<dbReference type="ProteomicsDB" id="248539"/>
<dbReference type="EnsemblPlants" id="AT4G02150.1">
    <property type="protein sequence ID" value="AT4G02150.1"/>
    <property type="gene ID" value="AT4G02150"/>
</dbReference>
<dbReference type="GeneID" id="827472"/>
<dbReference type="Gramene" id="AT4G02150.1">
    <property type="protein sequence ID" value="AT4G02150.1"/>
    <property type="gene ID" value="AT4G02150"/>
</dbReference>
<dbReference type="KEGG" id="ath:AT4G02150"/>
<dbReference type="Araport" id="AT4G02150"/>
<dbReference type="TAIR" id="AT4G02150">
    <property type="gene designation" value="MOS6"/>
</dbReference>
<dbReference type="eggNOG" id="KOG0166">
    <property type="taxonomic scope" value="Eukaryota"/>
</dbReference>
<dbReference type="HOGENOM" id="CLU_018084_6_0_1"/>
<dbReference type="InParanoid" id="O04294"/>
<dbReference type="OMA" id="HAPQSGF"/>
<dbReference type="OrthoDB" id="29145at2759"/>
<dbReference type="PhylomeDB" id="O04294"/>
<dbReference type="CD-CODE" id="4299E36E">
    <property type="entry name" value="Nucleolus"/>
</dbReference>
<dbReference type="EvolutionaryTrace" id="O04294"/>
<dbReference type="PRO" id="PR:O04294"/>
<dbReference type="Proteomes" id="UP000006548">
    <property type="component" value="Chromosome 4"/>
</dbReference>
<dbReference type="ExpressionAtlas" id="O04294">
    <property type="expression patterns" value="baseline and differential"/>
</dbReference>
<dbReference type="GO" id="GO:0005737">
    <property type="term" value="C:cytoplasm"/>
    <property type="evidence" value="ECO:0007669"/>
    <property type="project" value="InterPro"/>
</dbReference>
<dbReference type="GO" id="GO:0005634">
    <property type="term" value="C:nucleus"/>
    <property type="evidence" value="ECO:0000314"/>
    <property type="project" value="TAIR"/>
</dbReference>
<dbReference type="GO" id="GO:0061608">
    <property type="term" value="F:nuclear import signal receptor activity"/>
    <property type="evidence" value="ECO:0007669"/>
    <property type="project" value="InterPro"/>
</dbReference>
<dbReference type="GO" id="GO:0006952">
    <property type="term" value="P:defense response"/>
    <property type="evidence" value="ECO:0000315"/>
    <property type="project" value="TAIR"/>
</dbReference>
<dbReference type="GO" id="GO:0006606">
    <property type="term" value="P:protein import into nucleus"/>
    <property type="evidence" value="ECO:0007669"/>
    <property type="project" value="InterPro"/>
</dbReference>
<dbReference type="FunFam" id="1.20.5.690:FF:000002">
    <property type="entry name" value="Importin subunit alpha"/>
    <property type="match status" value="1"/>
</dbReference>
<dbReference type="FunFam" id="1.25.10.10:FF:000040">
    <property type="entry name" value="Importin subunit alpha"/>
    <property type="match status" value="1"/>
</dbReference>
<dbReference type="Gene3D" id="1.20.5.690">
    <property type="entry name" value="Importin-alpha, importin-beta-binding domain"/>
    <property type="match status" value="1"/>
</dbReference>
<dbReference type="Gene3D" id="1.25.10.10">
    <property type="entry name" value="Leucine-rich Repeat Variant"/>
    <property type="match status" value="1"/>
</dbReference>
<dbReference type="InterPro" id="IPR011989">
    <property type="entry name" value="ARM-like"/>
</dbReference>
<dbReference type="InterPro" id="IPR016024">
    <property type="entry name" value="ARM-type_fold"/>
</dbReference>
<dbReference type="InterPro" id="IPR032413">
    <property type="entry name" value="Arm_3"/>
</dbReference>
<dbReference type="InterPro" id="IPR000225">
    <property type="entry name" value="Armadillo"/>
</dbReference>
<dbReference type="InterPro" id="IPR002652">
    <property type="entry name" value="Importin-a_IBB"/>
</dbReference>
<dbReference type="InterPro" id="IPR036975">
    <property type="entry name" value="Importin-a_IBB_sf"/>
</dbReference>
<dbReference type="InterPro" id="IPR024931">
    <property type="entry name" value="Importin_alpha"/>
</dbReference>
<dbReference type="PANTHER" id="PTHR23316">
    <property type="entry name" value="IMPORTIN ALPHA"/>
    <property type="match status" value="1"/>
</dbReference>
<dbReference type="Pfam" id="PF00514">
    <property type="entry name" value="Arm"/>
    <property type="match status" value="8"/>
</dbReference>
<dbReference type="Pfam" id="PF16186">
    <property type="entry name" value="Arm_3"/>
    <property type="match status" value="1"/>
</dbReference>
<dbReference type="Pfam" id="PF01749">
    <property type="entry name" value="IBB"/>
    <property type="match status" value="1"/>
</dbReference>
<dbReference type="PIRSF" id="PIRSF005673">
    <property type="entry name" value="Importin_alpha"/>
    <property type="match status" value="1"/>
</dbReference>
<dbReference type="SMART" id="SM00185">
    <property type="entry name" value="ARM"/>
    <property type="match status" value="8"/>
</dbReference>
<dbReference type="SUPFAM" id="SSF48371">
    <property type="entry name" value="ARM repeat"/>
    <property type="match status" value="1"/>
</dbReference>
<dbReference type="PROSITE" id="PS50176">
    <property type="entry name" value="ARM_REPEAT"/>
    <property type="match status" value="4"/>
</dbReference>
<dbReference type="PROSITE" id="PS51214">
    <property type="entry name" value="IBB"/>
    <property type="match status" value="1"/>
</dbReference>
<name>IMPA3_ARATH</name>
<protein>
    <recommendedName>
        <fullName evidence="9">Importin subunit alpha-3</fullName>
        <shortName evidence="8">IMPa-3</shortName>
    </recommendedName>
    <alternativeName>
        <fullName>Karyopherin subunit alpha-2</fullName>
        <shortName>KAP-alpha-2</shortName>
    </alternativeName>
    <alternativeName>
        <fullName evidence="7">Protein MODIFIER OF SNC1 6</fullName>
    </alternativeName>
</protein>
<evidence type="ECO:0000250" key="1">
    <source>
        <dbReference type="UniProtKB" id="Q96321"/>
    </source>
</evidence>
<evidence type="ECO:0000255" key="2">
    <source>
        <dbReference type="PROSITE-ProRule" id="PRU00561"/>
    </source>
</evidence>
<evidence type="ECO:0000256" key="3">
    <source>
        <dbReference type="SAM" id="MobiDB-lite"/>
    </source>
</evidence>
<evidence type="ECO:0000269" key="4">
    <source>
    </source>
</evidence>
<evidence type="ECO:0000269" key="5">
    <source>
    </source>
</evidence>
<evidence type="ECO:0000269" key="6">
    <source>
    </source>
</evidence>
<evidence type="ECO:0000303" key="7">
    <source>
    </source>
</evidence>
<evidence type="ECO:0000303" key="8">
    <source>
    </source>
</evidence>
<evidence type="ECO:0000305" key="9"/>
<evidence type="ECO:0000312" key="10">
    <source>
        <dbReference type="Araport" id="AT4G02150"/>
    </source>
</evidence>
<evidence type="ECO:0007829" key="11">
    <source>
        <dbReference type="PDB" id="4TNM"/>
    </source>
</evidence>
<organism>
    <name type="scientific">Arabidopsis thaliana</name>
    <name type="common">Mouse-ear cress</name>
    <dbReference type="NCBI Taxonomy" id="3702"/>
    <lineage>
        <taxon>Eukaryota</taxon>
        <taxon>Viridiplantae</taxon>
        <taxon>Streptophyta</taxon>
        <taxon>Embryophyta</taxon>
        <taxon>Tracheophyta</taxon>
        <taxon>Spermatophyta</taxon>
        <taxon>Magnoliopsida</taxon>
        <taxon>eudicotyledons</taxon>
        <taxon>Gunneridae</taxon>
        <taxon>Pentapetalae</taxon>
        <taxon>rosids</taxon>
        <taxon>malvids</taxon>
        <taxon>Brassicales</taxon>
        <taxon>Brassicaceae</taxon>
        <taxon>Camelineae</taxon>
        <taxon>Arabidopsis</taxon>
    </lineage>
</organism>
<keyword id="KW-0002">3D-structure</keyword>
<keyword id="KW-0539">Nucleus</keyword>
<keyword id="KW-0653">Protein transport</keyword>
<keyword id="KW-1185">Reference proteome</keyword>
<keyword id="KW-0677">Repeat</keyword>
<keyword id="KW-0813">Transport</keyword>
<comment type="function">
    <text evidence="1 4 5">Binds to conventional NLS motifs and mediates nuclear protein import across the nuclear envelope (By similarity). Acts as a cellular receptor for the nuclear import of the virD2 protein of Agrobacterium, but is not essential for Agrobacterium-mediated root transformation (PubMed:18836040). May be involved in the regulation of pathogen-induced salicylic acid accumulation (PubMed:15964279).</text>
</comment>
<comment type="subunit">
    <text evidence="1 5 6">Forms a complex with importin subunit beta-1 (By similarity). Interacts with PRL1 (PubMed:9765207). Interacts with A.tumefaciens VirD2 and VirE2 (PubMed:18836040).</text>
</comment>
<comment type="interaction">
    <interactant intactId="EBI-1644689">
        <id>O04294</id>
    </interactant>
    <interactant intactId="EBI-1788073">
        <id>O80837</id>
        <label>DBP</label>
    </interactant>
    <organismsDiffer>false</organismsDiffer>
    <experiments>4</experiments>
</comment>
<comment type="interaction">
    <interactant intactId="EBI-1644689">
        <id>O04294</id>
    </interactant>
    <interactant intactId="EBI-25513208">
        <id>Q39101</id>
        <label>FER1</label>
    </interactant>
    <organismsDiffer>false</organismsDiffer>
    <experiments>3</experiments>
</comment>
<comment type="interaction">
    <interactant intactId="EBI-1644689">
        <id>O04294</id>
    </interactant>
    <interactant intactId="EBI-963597">
        <id>Q9MAA7</id>
        <label>GID1A</label>
    </interactant>
    <organismsDiffer>false</organismsDiffer>
    <experiments>3</experiments>
</comment>
<comment type="interaction">
    <interactant intactId="EBI-1644689">
        <id>O04294</id>
    </interactant>
    <interactant intactId="EBI-632243">
        <id>P93830</id>
        <label>IAA17</label>
    </interactant>
    <organismsDiffer>false</organismsDiffer>
    <experiments>3</experiments>
</comment>
<comment type="interaction">
    <interactant intactId="EBI-1644689">
        <id>O04294</id>
    </interactant>
    <interactant intactId="EBI-307174">
        <id>Q38822</id>
        <label>IAA3</label>
    </interactant>
    <organismsDiffer>false</organismsDiffer>
    <experiments>3</experiments>
</comment>
<comment type="interaction">
    <interactant intactId="EBI-1644689">
        <id>O04294</id>
    </interactant>
    <interactant intactId="EBI-25506855">
        <id>O23160</id>
        <label>MYB73</label>
    </interactant>
    <organismsDiffer>false</organismsDiffer>
    <experiments>3</experiments>
</comment>
<comment type="interaction">
    <interactant intactId="EBI-1644689">
        <id>O04294</id>
    </interactant>
    <interactant intactId="EBI-1382964">
        <id>Q42384</id>
        <label>PRL1</label>
    </interactant>
    <organismsDiffer>false</organismsDiffer>
    <experiments>3</experiments>
</comment>
<comment type="subcellular location">
    <subcellularLocation>
        <location evidence="4">Nucleus</location>
    </subcellularLocation>
</comment>
<comment type="disruption phenotype">
    <text evidence="4">No visible phenotype under normal growth conditions, but mutant plants show enhanced disease susceptibility to the virulent pathogen H.arabidopsidis isolate NOCO2.</text>
</comment>
<comment type="similarity">
    <text evidence="9">Belongs to the importin alpha family.</text>
</comment>
<gene>
    <name evidence="8" type="primary">IMPA3</name>
    <name type="synonym">KAP2</name>
    <name evidence="7" type="synonym">MOS6</name>
    <name evidence="10" type="ordered locus">At4g02150</name>
    <name type="ORF">T10M13.16</name>
</gene>
<proteinExistence type="evidence at protein level"/>
<sequence length="531" mass="58616">MSLRPSAKTEVRRNRYKVAVDAEEGRRRREDNLVEIRKNKREENLQKKRFTSSMAFGSATGQTEQDLSSANQLKDNLPAMVAGIWSEDSNSQLEATNLLRKLLSIEQNPPINEVVQSGVVPRVVKFLSRDDFPKLQFEAAWALTNIASGTSENTNVIIESGAVPIFIQLLSSASEDVREQAVWALGNVAGDSPKCRDLVLSYGAMTPLLSQFNENTKLSMLRNATWTLSNFCRGKPPPAFEQTQPALPVLERLVQSMDEEVLTDACWALSYLSDNSNDKIQAVIEAGVVPRLIQLLGHSSPSVLIPALRTIGNIVTGDDLQTQMVLDQQALPCLLNLLKNNYKKSIKKEACWTISNITAGNADQIQAVIDAGIIQSLVWVLQSAEFEVKKEAAWGISNATSGGTHDQIKFMVSQGCIKPLCDLLTCPDLKVVTVCLEALENILVVGEAEKNLGHTGEDNLYAQMIDEAEGLEKIENLQSHDNNDIYDKAVKILETFWTEDNEEEGNDENHAPQSGFQFGSTNVPPGQFNFI</sequence>
<accession>O04294</accession>
<accession>O04255</accession>
<accession>O49601</accession>
<accession>Q4JHM3</accession>
<accession>Q94F55</accession>
<feature type="chain" id="PRO_0000120738" description="Importin subunit alpha-3">
    <location>
        <begin position="1"/>
        <end position="531"/>
    </location>
</feature>
<feature type="domain" description="IBB" evidence="2">
    <location>
        <begin position="1"/>
        <end position="58"/>
    </location>
</feature>
<feature type="repeat" description="ARM 1">
    <location>
        <begin position="111"/>
        <end position="153"/>
    </location>
</feature>
<feature type="repeat" description="ARM 2">
    <location>
        <begin position="154"/>
        <end position="198"/>
    </location>
</feature>
<feature type="repeat" description="ARM 3">
    <location>
        <begin position="199"/>
        <end position="236"/>
    </location>
</feature>
<feature type="repeat" description="ARM 4">
    <location>
        <begin position="237"/>
        <end position="281"/>
    </location>
</feature>
<feature type="repeat" description="ARM 5">
    <location>
        <begin position="282"/>
        <end position="321"/>
    </location>
</feature>
<feature type="repeat" description="ARM 6">
    <location>
        <begin position="322"/>
        <end position="364"/>
    </location>
</feature>
<feature type="repeat" description="ARM 7">
    <location>
        <begin position="365"/>
        <end position="405"/>
    </location>
</feature>
<feature type="repeat" description="ARM 8">
    <location>
        <begin position="406"/>
        <end position="447"/>
    </location>
</feature>
<feature type="region of interest" description="Disordered" evidence="3">
    <location>
        <begin position="500"/>
        <end position="524"/>
    </location>
</feature>
<feature type="compositionally biased region" description="Polar residues" evidence="3">
    <location>
        <begin position="511"/>
        <end position="524"/>
    </location>
</feature>
<feature type="sequence conflict" description="In Ref. 3; CAA70703." evidence="9" ref="3">
    <original>P</original>
    <variation>L</variation>
    <location>
        <position position="207"/>
    </location>
</feature>
<feature type="sequence conflict" description="In Ref. 1; CAA75514." evidence="9" ref="1">
    <original>AL</original>
    <variation>VQ</variation>
    <location>
        <begin position="330"/>
        <end position="331"/>
    </location>
</feature>
<feature type="helix" evidence="11">
    <location>
        <begin position="93"/>
        <end position="103"/>
    </location>
</feature>
<feature type="strand" evidence="11">
    <location>
        <begin position="106"/>
        <end position="108"/>
    </location>
</feature>
<feature type="helix" evidence="11">
    <location>
        <begin position="112"/>
        <end position="117"/>
    </location>
</feature>
<feature type="helix" evidence="11">
    <location>
        <begin position="120"/>
        <end position="127"/>
    </location>
</feature>
<feature type="helix" evidence="11">
    <location>
        <begin position="133"/>
        <end position="147"/>
    </location>
</feature>
<feature type="helix" evidence="11">
    <location>
        <begin position="151"/>
        <end position="159"/>
    </location>
</feature>
<feature type="helix" evidence="11">
    <location>
        <begin position="163"/>
        <end position="168"/>
    </location>
</feature>
<feature type="helix" evidence="11">
    <location>
        <begin position="169"/>
        <end position="171"/>
    </location>
</feature>
<feature type="helix" evidence="11">
    <location>
        <begin position="175"/>
        <end position="191"/>
    </location>
</feature>
<feature type="helix" evidence="11">
    <location>
        <begin position="193"/>
        <end position="201"/>
    </location>
</feature>
<feature type="helix" evidence="11">
    <location>
        <begin position="205"/>
        <end position="209"/>
    </location>
</feature>
<feature type="helix" evidence="11">
    <location>
        <begin position="218"/>
        <end position="232"/>
    </location>
</feature>
<feature type="strand" evidence="11">
    <location>
        <begin position="234"/>
        <end position="236"/>
    </location>
</feature>
<feature type="helix" evidence="11">
    <location>
        <begin position="240"/>
        <end position="243"/>
    </location>
</feature>
<feature type="helix" evidence="11">
    <location>
        <begin position="246"/>
        <end position="253"/>
    </location>
</feature>
<feature type="helix" evidence="11">
    <location>
        <begin position="259"/>
        <end position="271"/>
    </location>
</feature>
<feature type="helix" evidence="11">
    <location>
        <begin position="277"/>
        <end position="286"/>
    </location>
</feature>
<feature type="helix" evidence="11">
    <location>
        <begin position="289"/>
        <end position="295"/>
    </location>
</feature>
<feature type="helix" evidence="11">
    <location>
        <begin position="301"/>
        <end position="315"/>
    </location>
</feature>
<feature type="helix" evidence="11">
    <location>
        <begin position="319"/>
        <end position="326"/>
    </location>
</feature>
<feature type="turn" evidence="11">
    <location>
        <begin position="327"/>
        <end position="329"/>
    </location>
</feature>
<feature type="helix" evidence="11">
    <location>
        <begin position="331"/>
        <end position="339"/>
    </location>
</feature>
<feature type="helix" evidence="11">
    <location>
        <begin position="344"/>
        <end position="357"/>
    </location>
</feature>
<feature type="helix" evidence="11">
    <location>
        <begin position="365"/>
        <end position="370"/>
    </location>
</feature>
<feature type="helix" evidence="11">
    <location>
        <begin position="373"/>
        <end position="382"/>
    </location>
</feature>
<feature type="helix" evidence="11">
    <location>
        <begin position="386"/>
        <end position="401"/>
    </location>
</feature>
<feature type="helix" evidence="11">
    <location>
        <begin position="406"/>
        <end position="413"/>
    </location>
</feature>
<feature type="helix" evidence="11">
    <location>
        <begin position="417"/>
        <end position="422"/>
    </location>
</feature>
<feature type="helix" evidence="11">
    <location>
        <begin position="423"/>
        <end position="425"/>
    </location>
</feature>
<feature type="helix" evidence="11">
    <location>
        <begin position="429"/>
        <end position="450"/>
    </location>
</feature>
<feature type="helix" evidence="11">
    <location>
        <begin position="460"/>
        <end position="467"/>
    </location>
</feature>
<feature type="helix" evidence="11">
    <location>
        <begin position="470"/>
        <end position="476"/>
    </location>
</feature>
<feature type="helix" evidence="11">
    <location>
        <begin position="477"/>
        <end position="479"/>
    </location>
</feature>
<feature type="helix" evidence="11">
    <location>
        <begin position="483"/>
        <end position="496"/>
    </location>
</feature>
<reference key="1">
    <citation type="online journal article" date="1998" name="Plant Gene Register">
        <title>Characterization of four cDNAs encoding different importin alpha homologues from Arabidopsis thaliana, designated AtIMPa1-4.</title>
        <authorList>
            <person name="Schledz M."/>
            <person name="Leclerc D."/>
            <person name="Neuhaus G."/>
            <person name="Merkle T."/>
        </authorList>
        <locator>PGR98-022</locator>
    </citation>
    <scope>NUCLEOTIDE SEQUENCE [MRNA]</scope>
</reference>
<reference key="2">
    <citation type="journal article" date="2005" name="Curr. Biol.">
        <title>An importin alpha homolog, MOS6, plays an important role in plant innate immunity.</title>
        <authorList>
            <person name="Palma K."/>
            <person name="Zhang Y."/>
            <person name="Li X."/>
        </authorList>
    </citation>
    <scope>NUCLEOTIDE SEQUENCE [MRNA]</scope>
    <scope>FUNCTION</scope>
    <scope>SUBCELLULAR LOCATION</scope>
    <scope>DISRUPTION PHENOTYPE</scope>
</reference>
<reference key="3">
    <citation type="submission" date="1997-06" db="EMBL/GenBank/DDBJ databases">
        <authorList>
            <person name="Salchert K.D."/>
        </authorList>
    </citation>
    <scope>NUCLEOTIDE SEQUENCE [MRNA]</scope>
    <source>
        <strain>cv. Columbia</strain>
    </source>
</reference>
<reference key="4">
    <citation type="journal article" date="1999" name="Nature">
        <title>Sequence and analysis of chromosome 4 of the plant Arabidopsis thaliana.</title>
        <authorList>
            <person name="Mayer K.F.X."/>
            <person name="Schueller C."/>
            <person name="Wambutt R."/>
            <person name="Murphy G."/>
            <person name="Volckaert G."/>
            <person name="Pohl T."/>
            <person name="Duesterhoeft A."/>
            <person name="Stiekema W."/>
            <person name="Entian K.-D."/>
            <person name="Terryn N."/>
            <person name="Harris B."/>
            <person name="Ansorge W."/>
            <person name="Brandt P."/>
            <person name="Grivell L.A."/>
            <person name="Rieger M."/>
            <person name="Weichselgartner M."/>
            <person name="de Simone V."/>
            <person name="Obermaier B."/>
            <person name="Mache R."/>
            <person name="Mueller M."/>
            <person name="Kreis M."/>
            <person name="Delseny M."/>
            <person name="Puigdomenech P."/>
            <person name="Watson M."/>
            <person name="Schmidtheini T."/>
            <person name="Reichert B."/>
            <person name="Portetelle D."/>
            <person name="Perez-Alonso M."/>
            <person name="Boutry M."/>
            <person name="Bancroft I."/>
            <person name="Vos P."/>
            <person name="Hoheisel J."/>
            <person name="Zimmermann W."/>
            <person name="Wedler H."/>
            <person name="Ridley P."/>
            <person name="Langham S.-A."/>
            <person name="McCullagh B."/>
            <person name="Bilham L."/>
            <person name="Robben J."/>
            <person name="van der Schueren J."/>
            <person name="Grymonprez B."/>
            <person name="Chuang Y.-J."/>
            <person name="Vandenbussche F."/>
            <person name="Braeken M."/>
            <person name="Weltjens I."/>
            <person name="Voet M."/>
            <person name="Bastiaens I."/>
            <person name="Aert R."/>
            <person name="Defoor E."/>
            <person name="Weitzenegger T."/>
            <person name="Bothe G."/>
            <person name="Ramsperger U."/>
            <person name="Hilbert H."/>
            <person name="Braun M."/>
            <person name="Holzer E."/>
            <person name="Brandt A."/>
            <person name="Peters S."/>
            <person name="van Staveren M."/>
            <person name="Dirkse W."/>
            <person name="Mooijman P."/>
            <person name="Klein Lankhorst R."/>
            <person name="Rose M."/>
            <person name="Hauf J."/>
            <person name="Koetter P."/>
            <person name="Berneiser S."/>
            <person name="Hempel S."/>
            <person name="Feldpausch M."/>
            <person name="Lamberth S."/>
            <person name="Van den Daele H."/>
            <person name="De Keyser A."/>
            <person name="Buysshaert C."/>
            <person name="Gielen J."/>
            <person name="Villarroel R."/>
            <person name="De Clercq R."/>
            <person name="van Montagu M."/>
            <person name="Rogers J."/>
            <person name="Cronin A."/>
            <person name="Quail M.A."/>
            <person name="Bray-Allen S."/>
            <person name="Clark L."/>
            <person name="Doggett J."/>
            <person name="Hall S."/>
            <person name="Kay M."/>
            <person name="Lennard N."/>
            <person name="McLay K."/>
            <person name="Mayes R."/>
            <person name="Pettett A."/>
            <person name="Rajandream M.A."/>
            <person name="Lyne M."/>
            <person name="Benes V."/>
            <person name="Rechmann S."/>
            <person name="Borkova D."/>
            <person name="Bloecker H."/>
            <person name="Scharfe M."/>
            <person name="Grimm M."/>
            <person name="Loehnert T.-H."/>
            <person name="Dose S."/>
            <person name="de Haan M."/>
            <person name="Maarse A.C."/>
            <person name="Schaefer M."/>
            <person name="Mueller-Auer S."/>
            <person name="Gabel C."/>
            <person name="Fuchs M."/>
            <person name="Fartmann B."/>
            <person name="Granderath K."/>
            <person name="Dauner D."/>
            <person name="Herzl A."/>
            <person name="Neumann S."/>
            <person name="Argiriou A."/>
            <person name="Vitale D."/>
            <person name="Liguori R."/>
            <person name="Piravandi E."/>
            <person name="Massenet O."/>
            <person name="Quigley F."/>
            <person name="Clabauld G."/>
            <person name="Muendlein A."/>
            <person name="Felber R."/>
            <person name="Schnabl S."/>
            <person name="Hiller R."/>
            <person name="Schmidt W."/>
            <person name="Lecharny A."/>
            <person name="Aubourg S."/>
            <person name="Chefdor F."/>
            <person name="Cooke R."/>
            <person name="Berger C."/>
            <person name="Monfort A."/>
            <person name="Casacuberta E."/>
            <person name="Gibbons T."/>
            <person name="Weber N."/>
            <person name="Vandenbol M."/>
            <person name="Bargues M."/>
            <person name="Terol J."/>
            <person name="Torres A."/>
            <person name="Perez-Perez A."/>
            <person name="Purnelle B."/>
            <person name="Bent E."/>
            <person name="Johnson S."/>
            <person name="Tacon D."/>
            <person name="Jesse T."/>
            <person name="Heijnen L."/>
            <person name="Schwarz S."/>
            <person name="Scholler P."/>
            <person name="Heber S."/>
            <person name="Francs P."/>
            <person name="Bielke C."/>
            <person name="Frishman D."/>
            <person name="Haase D."/>
            <person name="Lemcke K."/>
            <person name="Mewes H.-W."/>
            <person name="Stocker S."/>
            <person name="Zaccaria P."/>
            <person name="Bevan M."/>
            <person name="Wilson R.K."/>
            <person name="de la Bastide M."/>
            <person name="Habermann K."/>
            <person name="Parnell L."/>
            <person name="Dedhia N."/>
            <person name="Gnoj L."/>
            <person name="Schutz K."/>
            <person name="Huang E."/>
            <person name="Spiegel L."/>
            <person name="Sekhon M."/>
            <person name="Murray J."/>
            <person name="Sheet P."/>
            <person name="Cordes M."/>
            <person name="Abu-Threideh J."/>
            <person name="Stoneking T."/>
            <person name="Kalicki J."/>
            <person name="Graves T."/>
            <person name="Harmon G."/>
            <person name="Edwards J."/>
            <person name="Latreille P."/>
            <person name="Courtney L."/>
            <person name="Cloud J."/>
            <person name="Abbott A."/>
            <person name="Scott K."/>
            <person name="Johnson D."/>
            <person name="Minx P."/>
            <person name="Bentley D."/>
            <person name="Fulton B."/>
            <person name="Miller N."/>
            <person name="Greco T."/>
            <person name="Kemp K."/>
            <person name="Kramer J."/>
            <person name="Fulton L."/>
            <person name="Mardis E."/>
            <person name="Dante M."/>
            <person name="Pepin K."/>
            <person name="Hillier L.W."/>
            <person name="Nelson J."/>
            <person name="Spieth J."/>
            <person name="Ryan E."/>
            <person name="Andrews S."/>
            <person name="Geisel C."/>
            <person name="Layman D."/>
            <person name="Du H."/>
            <person name="Ali J."/>
            <person name="Berghoff A."/>
            <person name="Jones K."/>
            <person name="Drone K."/>
            <person name="Cotton M."/>
            <person name="Joshu C."/>
            <person name="Antonoiu B."/>
            <person name="Zidanic M."/>
            <person name="Strong C."/>
            <person name="Sun H."/>
            <person name="Lamar B."/>
            <person name="Yordan C."/>
            <person name="Ma P."/>
            <person name="Zhong J."/>
            <person name="Preston R."/>
            <person name="Vil D."/>
            <person name="Shekher M."/>
            <person name="Matero A."/>
            <person name="Shah R."/>
            <person name="Swaby I.K."/>
            <person name="O'Shaughnessy A."/>
            <person name="Rodriguez M."/>
            <person name="Hoffman J."/>
            <person name="Till S."/>
            <person name="Granat S."/>
            <person name="Shohdy N."/>
            <person name="Hasegawa A."/>
            <person name="Hameed A."/>
            <person name="Lodhi M."/>
            <person name="Johnson A."/>
            <person name="Chen E."/>
            <person name="Marra M.A."/>
            <person name="Martienssen R."/>
            <person name="McCombie W.R."/>
        </authorList>
    </citation>
    <scope>NUCLEOTIDE SEQUENCE [LARGE SCALE GENOMIC DNA]</scope>
    <source>
        <strain>cv. Columbia</strain>
    </source>
</reference>
<reference key="5">
    <citation type="journal article" date="2017" name="Plant J.">
        <title>Araport11: a complete reannotation of the Arabidopsis thaliana reference genome.</title>
        <authorList>
            <person name="Cheng C.Y."/>
            <person name="Krishnakumar V."/>
            <person name="Chan A.P."/>
            <person name="Thibaud-Nissen F."/>
            <person name="Schobel S."/>
            <person name="Town C.D."/>
        </authorList>
    </citation>
    <scope>GENOME REANNOTATION</scope>
    <source>
        <strain>cv. Columbia</strain>
    </source>
</reference>
<reference key="6">
    <citation type="journal article" date="2003" name="Science">
        <title>Empirical analysis of transcriptional activity in the Arabidopsis genome.</title>
        <authorList>
            <person name="Yamada K."/>
            <person name="Lim J."/>
            <person name="Dale J.M."/>
            <person name="Chen H."/>
            <person name="Shinn P."/>
            <person name="Palm C.J."/>
            <person name="Southwick A.M."/>
            <person name="Wu H.C."/>
            <person name="Kim C.J."/>
            <person name="Nguyen M."/>
            <person name="Pham P.K."/>
            <person name="Cheuk R.F."/>
            <person name="Karlin-Newmann G."/>
            <person name="Liu S.X."/>
            <person name="Lam B."/>
            <person name="Sakano H."/>
            <person name="Wu T."/>
            <person name="Yu G."/>
            <person name="Miranda M."/>
            <person name="Quach H.L."/>
            <person name="Tripp M."/>
            <person name="Chang C.H."/>
            <person name="Lee J.M."/>
            <person name="Toriumi M.J."/>
            <person name="Chan M.M."/>
            <person name="Tang C.C."/>
            <person name="Onodera C.S."/>
            <person name="Deng J.M."/>
            <person name="Akiyama K."/>
            <person name="Ansari Y."/>
            <person name="Arakawa T."/>
            <person name="Banh J."/>
            <person name="Banno F."/>
            <person name="Bowser L."/>
            <person name="Brooks S.Y."/>
            <person name="Carninci P."/>
            <person name="Chao Q."/>
            <person name="Choy N."/>
            <person name="Enju A."/>
            <person name="Goldsmith A.D."/>
            <person name="Gurjal M."/>
            <person name="Hansen N.F."/>
            <person name="Hayashizaki Y."/>
            <person name="Johnson-Hopson C."/>
            <person name="Hsuan V.W."/>
            <person name="Iida K."/>
            <person name="Karnes M."/>
            <person name="Khan S."/>
            <person name="Koesema E."/>
            <person name="Ishida J."/>
            <person name="Jiang P.X."/>
            <person name="Jones T."/>
            <person name="Kawai J."/>
            <person name="Kamiya A."/>
            <person name="Meyers C."/>
            <person name="Nakajima M."/>
            <person name="Narusaka M."/>
            <person name="Seki M."/>
            <person name="Sakurai T."/>
            <person name="Satou M."/>
            <person name="Tamse R."/>
            <person name="Vaysberg M."/>
            <person name="Wallender E.K."/>
            <person name="Wong C."/>
            <person name="Yamamura Y."/>
            <person name="Yuan S."/>
            <person name="Shinozaki K."/>
            <person name="Davis R.W."/>
            <person name="Theologis A."/>
            <person name="Ecker J.R."/>
        </authorList>
    </citation>
    <scope>NUCLEOTIDE SEQUENCE [LARGE SCALE MRNA]</scope>
    <source>
        <strain>cv. Columbia</strain>
    </source>
</reference>
<reference key="7">
    <citation type="journal article" date="1998" name="Genes Dev.">
        <title>Pleiotropic control of glucose and hormone responses by PRL1, a nuclear WD protein, in Arabidopsis.</title>
        <authorList>
            <person name="Nemeth K."/>
            <person name="Salchert K."/>
            <person name="Putnoky P."/>
            <person name="Bhalerao R."/>
            <person name="Koncz-Kalman Z."/>
            <person name="Stankovic-Stangeland B."/>
            <person name="Bako L."/>
            <person name="Mathur J."/>
            <person name="Oekresz L."/>
            <person name="Stabel S."/>
            <person name="Geigenberger P."/>
            <person name="Stitt M."/>
            <person name="Redei G.P."/>
            <person name="Schell J."/>
            <person name="Koncz C."/>
        </authorList>
    </citation>
    <scope>INTERACTION WITH PRL1</scope>
</reference>
<reference key="8">
    <citation type="journal article" date="2008" name="Plant Cell">
        <title>IMPa-4, an Arabidopsis importin alpha isoform, is preferentially involved in agrobacterium-mediated plant transformation.</title>
        <authorList>
            <person name="Bhattacharjee S."/>
            <person name="Lee L.Y."/>
            <person name="Oltmanns H."/>
            <person name="Cao H."/>
            <person name="Gupta V."/>
            <person name="Cuperus J."/>
            <person name="Gelvin S.B."/>
        </authorList>
    </citation>
    <scope>FUNCTION</scope>
    <scope>INTERACTION WITH AGROBACTERIUM VIRD2 AND VIRE2</scope>
    <scope>GENE FAMILY</scope>
</reference>